<comment type="function">
    <text evidence="1">One of the primary rRNA binding proteins, it binds directly to 16S rRNA where it nucleates assembly of the head domain of the 30S subunit. Is located at the subunit interface close to the decoding center, probably blocks exit of the E-site tRNA.</text>
</comment>
<comment type="subunit">
    <text evidence="1">Part of the 30S ribosomal subunit. Contacts proteins S9 and S11.</text>
</comment>
<comment type="similarity">
    <text evidence="1">Belongs to the universal ribosomal protein uS7 family.</text>
</comment>
<sequence length="156" mass="17632">MPRRREVPKRDVLPDPKFGNVEVAKFMNVLMLDGKKSVAERIVYGAFDQIEKKAGKAPIEVFSVAINNVKPVVEVKSRRVGGANYQVPVEVRPSRRLALAMRWLREAAKKRSEKSMALRLAGELLEASEGRGGAMKKRDEVHRMAEANKAFSHFRF</sequence>
<reference key="1">
    <citation type="journal article" date="2006" name="Nat. Biotechnol.">
        <title>Genome sequence of the bioplastic-producing 'Knallgas' bacterium Ralstonia eutropha H16.</title>
        <authorList>
            <person name="Pohlmann A."/>
            <person name="Fricke W.F."/>
            <person name="Reinecke F."/>
            <person name="Kusian B."/>
            <person name="Liesegang H."/>
            <person name="Cramm R."/>
            <person name="Eitinger T."/>
            <person name="Ewering C."/>
            <person name="Poetter M."/>
            <person name="Schwartz E."/>
            <person name="Strittmatter A."/>
            <person name="Voss I."/>
            <person name="Gottschalk G."/>
            <person name="Steinbuechel A."/>
            <person name="Friedrich B."/>
            <person name="Bowien B."/>
        </authorList>
    </citation>
    <scope>NUCLEOTIDE SEQUENCE [LARGE SCALE GENOMIC DNA]</scope>
    <source>
        <strain>ATCC 17699 / DSM 428 / KCTC 22496 / NCIMB 10442 / H16 / Stanier 337</strain>
    </source>
</reference>
<dbReference type="EMBL" id="AM260479">
    <property type="protein sequence ID" value="CAJ94561.1"/>
    <property type="molecule type" value="Genomic_DNA"/>
</dbReference>
<dbReference type="RefSeq" id="WP_010810459.1">
    <property type="nucleotide sequence ID" value="NZ_CP039287.1"/>
</dbReference>
<dbReference type="SMR" id="Q0K610"/>
<dbReference type="STRING" id="381666.H16_A3493"/>
<dbReference type="GeneID" id="34308574"/>
<dbReference type="KEGG" id="reh:H16_A3493"/>
<dbReference type="eggNOG" id="COG0049">
    <property type="taxonomic scope" value="Bacteria"/>
</dbReference>
<dbReference type="HOGENOM" id="CLU_072226_1_1_4"/>
<dbReference type="OrthoDB" id="9807653at2"/>
<dbReference type="Proteomes" id="UP000008210">
    <property type="component" value="Chromosome 1"/>
</dbReference>
<dbReference type="GO" id="GO:0015935">
    <property type="term" value="C:small ribosomal subunit"/>
    <property type="evidence" value="ECO:0007669"/>
    <property type="project" value="InterPro"/>
</dbReference>
<dbReference type="GO" id="GO:0019843">
    <property type="term" value="F:rRNA binding"/>
    <property type="evidence" value="ECO:0007669"/>
    <property type="project" value="UniProtKB-UniRule"/>
</dbReference>
<dbReference type="GO" id="GO:0003735">
    <property type="term" value="F:structural constituent of ribosome"/>
    <property type="evidence" value="ECO:0007669"/>
    <property type="project" value="InterPro"/>
</dbReference>
<dbReference type="GO" id="GO:0000049">
    <property type="term" value="F:tRNA binding"/>
    <property type="evidence" value="ECO:0007669"/>
    <property type="project" value="UniProtKB-UniRule"/>
</dbReference>
<dbReference type="GO" id="GO:0006412">
    <property type="term" value="P:translation"/>
    <property type="evidence" value="ECO:0007669"/>
    <property type="project" value="UniProtKB-UniRule"/>
</dbReference>
<dbReference type="CDD" id="cd14869">
    <property type="entry name" value="uS7_Bacteria"/>
    <property type="match status" value="1"/>
</dbReference>
<dbReference type="FunFam" id="1.10.455.10:FF:000001">
    <property type="entry name" value="30S ribosomal protein S7"/>
    <property type="match status" value="1"/>
</dbReference>
<dbReference type="Gene3D" id="1.10.455.10">
    <property type="entry name" value="Ribosomal protein S7 domain"/>
    <property type="match status" value="1"/>
</dbReference>
<dbReference type="HAMAP" id="MF_00480_B">
    <property type="entry name" value="Ribosomal_uS7_B"/>
    <property type="match status" value="1"/>
</dbReference>
<dbReference type="InterPro" id="IPR000235">
    <property type="entry name" value="Ribosomal_uS7"/>
</dbReference>
<dbReference type="InterPro" id="IPR005717">
    <property type="entry name" value="Ribosomal_uS7_bac/org-type"/>
</dbReference>
<dbReference type="InterPro" id="IPR020606">
    <property type="entry name" value="Ribosomal_uS7_CS"/>
</dbReference>
<dbReference type="InterPro" id="IPR023798">
    <property type="entry name" value="Ribosomal_uS7_dom"/>
</dbReference>
<dbReference type="InterPro" id="IPR036823">
    <property type="entry name" value="Ribosomal_uS7_dom_sf"/>
</dbReference>
<dbReference type="NCBIfam" id="TIGR01029">
    <property type="entry name" value="rpsG_bact"/>
    <property type="match status" value="1"/>
</dbReference>
<dbReference type="PANTHER" id="PTHR11205">
    <property type="entry name" value="RIBOSOMAL PROTEIN S7"/>
    <property type="match status" value="1"/>
</dbReference>
<dbReference type="Pfam" id="PF00177">
    <property type="entry name" value="Ribosomal_S7"/>
    <property type="match status" value="1"/>
</dbReference>
<dbReference type="PIRSF" id="PIRSF002122">
    <property type="entry name" value="RPS7p_RPS7a_RPS5e_RPS7o"/>
    <property type="match status" value="1"/>
</dbReference>
<dbReference type="SUPFAM" id="SSF47973">
    <property type="entry name" value="Ribosomal protein S7"/>
    <property type="match status" value="1"/>
</dbReference>
<dbReference type="PROSITE" id="PS00052">
    <property type="entry name" value="RIBOSOMAL_S7"/>
    <property type="match status" value="1"/>
</dbReference>
<proteinExistence type="inferred from homology"/>
<protein>
    <recommendedName>
        <fullName evidence="1">Small ribosomal subunit protein uS7</fullName>
    </recommendedName>
    <alternativeName>
        <fullName evidence="2">30S ribosomal protein S7</fullName>
    </alternativeName>
</protein>
<organism>
    <name type="scientific">Cupriavidus necator (strain ATCC 17699 / DSM 428 / KCTC 22496 / NCIMB 10442 / H16 / Stanier 337)</name>
    <name type="common">Ralstonia eutropha</name>
    <dbReference type="NCBI Taxonomy" id="381666"/>
    <lineage>
        <taxon>Bacteria</taxon>
        <taxon>Pseudomonadati</taxon>
        <taxon>Pseudomonadota</taxon>
        <taxon>Betaproteobacteria</taxon>
        <taxon>Burkholderiales</taxon>
        <taxon>Burkholderiaceae</taxon>
        <taxon>Cupriavidus</taxon>
    </lineage>
</organism>
<evidence type="ECO:0000255" key="1">
    <source>
        <dbReference type="HAMAP-Rule" id="MF_00480"/>
    </source>
</evidence>
<evidence type="ECO:0000305" key="2"/>
<keyword id="KW-1185">Reference proteome</keyword>
<keyword id="KW-0687">Ribonucleoprotein</keyword>
<keyword id="KW-0689">Ribosomal protein</keyword>
<keyword id="KW-0694">RNA-binding</keyword>
<keyword id="KW-0699">rRNA-binding</keyword>
<keyword id="KW-0820">tRNA-binding</keyword>
<feature type="chain" id="PRO_1000014267" description="Small ribosomal subunit protein uS7">
    <location>
        <begin position="1"/>
        <end position="156"/>
    </location>
</feature>
<gene>
    <name evidence="1" type="primary">rpsG</name>
    <name type="ordered locus">H16_A3493</name>
</gene>
<accession>Q0K610</accession>
<name>RS7_CUPNH</name>